<feature type="chain" id="PRO_0000210823" description="Fe(2+) transporter FeoB">
    <location>
        <begin position="1"/>
        <end position="773"/>
    </location>
</feature>
<feature type="transmembrane region" description="Helical" evidence="2">
    <location>
        <begin position="282"/>
        <end position="302"/>
    </location>
</feature>
<feature type="transmembrane region" description="Helical" evidence="2">
    <location>
        <begin position="309"/>
        <end position="329"/>
    </location>
</feature>
<feature type="transmembrane region" description="Helical" evidence="2">
    <location>
        <begin position="344"/>
        <end position="366"/>
    </location>
</feature>
<feature type="transmembrane region" description="Helical" evidence="2">
    <location>
        <begin position="383"/>
        <end position="403"/>
    </location>
</feature>
<feature type="transmembrane region" description="Helical" evidence="2">
    <location>
        <begin position="427"/>
        <end position="447"/>
    </location>
</feature>
<feature type="transmembrane region" description="Helical" evidence="2">
    <location>
        <begin position="453"/>
        <end position="473"/>
    </location>
</feature>
<feature type="transmembrane region" description="Helical" evidence="2">
    <location>
        <begin position="518"/>
        <end position="538"/>
    </location>
</feature>
<feature type="transmembrane region" description="Helical" evidence="2">
    <location>
        <begin position="664"/>
        <end position="684"/>
    </location>
</feature>
<feature type="transmembrane region" description="Helical" evidence="2">
    <location>
        <begin position="691"/>
        <end position="711"/>
    </location>
</feature>
<feature type="transmembrane region" description="Helical" evidence="2">
    <location>
        <begin position="722"/>
        <end position="742"/>
    </location>
</feature>
<feature type="domain" description="FeoB-type G" evidence="3">
    <location>
        <begin position="3"/>
        <end position="169"/>
    </location>
</feature>
<feature type="binding site" evidence="3">
    <location>
        <begin position="10"/>
        <end position="17"/>
    </location>
    <ligand>
        <name>GTP</name>
        <dbReference type="ChEBI" id="CHEBI:37565"/>
        <label>1</label>
    </ligand>
</feature>
<feature type="binding site" evidence="3">
    <location>
        <begin position="35"/>
        <end position="39"/>
    </location>
    <ligand>
        <name>GTP</name>
        <dbReference type="ChEBI" id="CHEBI:37565"/>
        <label>2</label>
    </ligand>
</feature>
<feature type="binding site" evidence="3">
    <location>
        <begin position="56"/>
        <end position="59"/>
    </location>
    <ligand>
        <name>GTP</name>
        <dbReference type="ChEBI" id="CHEBI:37565"/>
        <label>3</label>
    </ligand>
</feature>
<feature type="binding site" evidence="3">
    <location>
        <begin position="120"/>
        <end position="123"/>
    </location>
    <ligand>
        <name>GTP</name>
        <dbReference type="ChEBI" id="CHEBI:37565"/>
    </ligand>
</feature>
<feature type="binding site" evidence="3">
    <location>
        <begin position="149"/>
        <end position="151"/>
    </location>
    <ligand>
        <name>GTP</name>
        <dbReference type="ChEBI" id="CHEBI:37565"/>
    </ligand>
</feature>
<reference key="1">
    <citation type="journal article" date="2002" name="Proc. Natl. Acad. Sci. U.S.A.">
        <title>Extensive mosaic structure revealed by the complete genome sequence of uropathogenic Escherichia coli.</title>
        <authorList>
            <person name="Welch R.A."/>
            <person name="Burland V."/>
            <person name="Plunkett G. III"/>
            <person name="Redford P."/>
            <person name="Roesch P."/>
            <person name="Rasko D."/>
            <person name="Buckles E.L."/>
            <person name="Liou S.-R."/>
            <person name="Boutin A."/>
            <person name="Hackett J."/>
            <person name="Stroud D."/>
            <person name="Mayhew G.F."/>
            <person name="Rose D.J."/>
            <person name="Zhou S."/>
            <person name="Schwartz D.C."/>
            <person name="Perna N.T."/>
            <person name="Mobley H.L.T."/>
            <person name="Donnenberg M.S."/>
            <person name="Blattner F.R."/>
        </authorList>
    </citation>
    <scope>NUCLEOTIDE SEQUENCE [LARGE SCALE GENOMIC DNA]</scope>
    <source>
        <strain>CFT073 / ATCC 700928 / UPEC</strain>
    </source>
</reference>
<sequence>MKKLTIGLIGNPNSGKTTLFNQLTGSRQRVGNWAGVTVERKEGQFSTTDHQVTLVDLPGTYSLTTISSQTSLDEQIACHYILSGDADLLINVVDASNLERNLYLTLQLLELGIPCIVALNMLDIAEKQNIRIEIDALSARLGCPVIPLVSTRGRGIEALKLAIDRYKANENVELVHYAQPLLNEADSLAKVMPSDIPLKQRRWLGLQMLEGDIYSRAYAGEASQHLDAALARLRNEMDDPALHIADARYQCIAAICDVVSNTLTAEPSRFTTAVDKIVLNRFLGLPIFLFVMYLMFLLAINIGGALQPLFDVGSVALFVHGIQWIGYTLHFPDWLTIFLAQGLGGGINTVLPLVPQIGMMYLFLSFLEDSGYMARAAFVMDRLMQALGLPGKSFVPLIVGFGCNVPSVMGARTLDAPRERLMTIMMAPFMSCGARLAIFAVFAAAFFGQNGALAVFSLYMLGIVMAVLTGLMLKYTIMRGEATPFVMELPVYHVPHVKSLIIQTWQRLKGFVLRAGKVIIIVSIFLSAFNSFSLSGKIVDNINDSALASVSRVITPVFKPIGVHEDNWQATVGLFTGAMAKEVVVGTLNTLYTAENIQDEEFNPAEFNLGEELFSAVDETWQSLKDTFSLSVLMNPIEASKGDGEMGTGAMGVMDQKFGSAAAAYSYLIFVLLYVPCISVMGAIARESSRGWMGFSILWGLNIAYSLATLFYQVASYSQHPTYSLVCILAVILFNIVVIGLLRRARSRVDVELLATRKSVSSCCAASTTGDCH</sequence>
<comment type="function">
    <text evidence="1">Probable transporter of a GTP-driven Fe(2+) uptake system.</text>
</comment>
<comment type="subcellular location">
    <subcellularLocation>
        <location evidence="1">Cell inner membrane</location>
        <topology evidence="1">Multi-pass membrane protein</topology>
    </subcellularLocation>
</comment>
<comment type="induction">
    <text evidence="1">Iron uptake is repressed by the global regulator Fur.</text>
</comment>
<comment type="similarity">
    <text evidence="3">Belongs to the TRAFAC class TrmE-Era-EngA-EngB-Septin-like GTPase superfamily. FeoB GTPase (TC 9.A.8) family.</text>
</comment>
<comment type="sequence caution" evidence="4">
    <conflict type="erroneous initiation">
        <sequence resource="EMBL-CDS" id="AAN82624"/>
    </conflict>
    <text>Extended N-terminus.</text>
</comment>
<proteinExistence type="inferred from homology"/>
<dbReference type="EMBL" id="AE014075">
    <property type="protein sequence ID" value="AAN82624.1"/>
    <property type="status" value="ALT_INIT"/>
    <property type="molecule type" value="Genomic_DNA"/>
</dbReference>
<dbReference type="RefSeq" id="WP_000737042.1">
    <property type="nucleotide sequence ID" value="NZ_CP051263.1"/>
</dbReference>
<dbReference type="SMR" id="Q8FCT7"/>
<dbReference type="STRING" id="199310.c4186"/>
<dbReference type="KEGG" id="ecc:c4186"/>
<dbReference type="eggNOG" id="COG0370">
    <property type="taxonomic scope" value="Bacteria"/>
</dbReference>
<dbReference type="HOGENOM" id="CLU_013350_3_0_6"/>
<dbReference type="Proteomes" id="UP000001410">
    <property type="component" value="Chromosome"/>
</dbReference>
<dbReference type="GO" id="GO:0005886">
    <property type="term" value="C:plasma membrane"/>
    <property type="evidence" value="ECO:0007669"/>
    <property type="project" value="UniProtKB-SubCell"/>
</dbReference>
<dbReference type="GO" id="GO:0015093">
    <property type="term" value="F:ferrous iron transmembrane transporter activity"/>
    <property type="evidence" value="ECO:0007669"/>
    <property type="project" value="InterPro"/>
</dbReference>
<dbReference type="GO" id="GO:0005525">
    <property type="term" value="F:GTP binding"/>
    <property type="evidence" value="ECO:0007669"/>
    <property type="project" value="UniProtKB-KW"/>
</dbReference>
<dbReference type="CDD" id="cd01879">
    <property type="entry name" value="FeoB"/>
    <property type="match status" value="1"/>
</dbReference>
<dbReference type="FunFam" id="1.10.287.1770:FF:000001">
    <property type="entry name" value="Ferrous iron transport protein B"/>
    <property type="match status" value="1"/>
</dbReference>
<dbReference type="FunFam" id="3.40.50.300:FF:000426">
    <property type="entry name" value="Ferrous iron transport protein B"/>
    <property type="match status" value="1"/>
</dbReference>
<dbReference type="Gene3D" id="1.10.287.1770">
    <property type="match status" value="1"/>
</dbReference>
<dbReference type="Gene3D" id="3.40.50.300">
    <property type="entry name" value="P-loop containing nucleotide triphosphate hydrolases"/>
    <property type="match status" value="1"/>
</dbReference>
<dbReference type="InterPro" id="IPR003373">
    <property type="entry name" value="Fe2_transport_prot-B"/>
</dbReference>
<dbReference type="InterPro" id="IPR011640">
    <property type="entry name" value="Fe2_transport_prot_B_C"/>
</dbReference>
<dbReference type="InterPro" id="IPR041069">
    <property type="entry name" value="FeoB_Cyto"/>
</dbReference>
<dbReference type="InterPro" id="IPR050860">
    <property type="entry name" value="FeoB_GTPase"/>
</dbReference>
<dbReference type="InterPro" id="IPR030389">
    <property type="entry name" value="G_FEOB_dom"/>
</dbReference>
<dbReference type="InterPro" id="IPR011642">
    <property type="entry name" value="Gate_dom"/>
</dbReference>
<dbReference type="InterPro" id="IPR027417">
    <property type="entry name" value="P-loop_NTPase"/>
</dbReference>
<dbReference type="NCBIfam" id="TIGR00437">
    <property type="entry name" value="feoB"/>
    <property type="match status" value="1"/>
</dbReference>
<dbReference type="NCBIfam" id="NF007105">
    <property type="entry name" value="PRK09554.1"/>
    <property type="match status" value="1"/>
</dbReference>
<dbReference type="PANTHER" id="PTHR43185:SF1">
    <property type="entry name" value="FE(2+) TRANSPORTER FEOB"/>
    <property type="match status" value="1"/>
</dbReference>
<dbReference type="PANTHER" id="PTHR43185">
    <property type="entry name" value="FERROUS IRON TRANSPORT PROTEIN B"/>
    <property type="match status" value="1"/>
</dbReference>
<dbReference type="Pfam" id="PF07664">
    <property type="entry name" value="FeoB_C"/>
    <property type="match status" value="1"/>
</dbReference>
<dbReference type="Pfam" id="PF17910">
    <property type="entry name" value="FeoB_Cyto"/>
    <property type="match status" value="1"/>
</dbReference>
<dbReference type="Pfam" id="PF02421">
    <property type="entry name" value="FeoB_N"/>
    <property type="match status" value="1"/>
</dbReference>
<dbReference type="Pfam" id="PF07670">
    <property type="entry name" value="Gate"/>
    <property type="match status" value="2"/>
</dbReference>
<dbReference type="SUPFAM" id="SSF52540">
    <property type="entry name" value="P-loop containing nucleoside triphosphate hydrolases"/>
    <property type="match status" value="1"/>
</dbReference>
<dbReference type="PROSITE" id="PS51711">
    <property type="entry name" value="G_FEOB"/>
    <property type="match status" value="1"/>
</dbReference>
<keyword id="KW-0997">Cell inner membrane</keyword>
<keyword id="KW-1003">Cell membrane</keyword>
<keyword id="KW-0342">GTP-binding</keyword>
<keyword id="KW-0406">Ion transport</keyword>
<keyword id="KW-0408">Iron</keyword>
<keyword id="KW-0410">Iron transport</keyword>
<keyword id="KW-0472">Membrane</keyword>
<keyword id="KW-0547">Nucleotide-binding</keyword>
<keyword id="KW-1185">Reference proteome</keyword>
<keyword id="KW-0812">Transmembrane</keyword>
<keyword id="KW-1133">Transmembrane helix</keyword>
<keyword id="KW-0813">Transport</keyword>
<name>FEOB_ECOL6</name>
<gene>
    <name type="primary">feoB</name>
    <name type="ordered locus">c4186</name>
</gene>
<evidence type="ECO:0000250" key="1">
    <source>
        <dbReference type="UniProtKB" id="P33650"/>
    </source>
</evidence>
<evidence type="ECO:0000255" key="2"/>
<evidence type="ECO:0000255" key="3">
    <source>
        <dbReference type="PROSITE-ProRule" id="PRU01048"/>
    </source>
</evidence>
<evidence type="ECO:0000305" key="4"/>
<accession>Q8FCT7</accession>
<organism>
    <name type="scientific">Escherichia coli O6:H1 (strain CFT073 / ATCC 700928 / UPEC)</name>
    <dbReference type="NCBI Taxonomy" id="199310"/>
    <lineage>
        <taxon>Bacteria</taxon>
        <taxon>Pseudomonadati</taxon>
        <taxon>Pseudomonadota</taxon>
        <taxon>Gammaproteobacteria</taxon>
        <taxon>Enterobacterales</taxon>
        <taxon>Enterobacteriaceae</taxon>
        <taxon>Escherichia</taxon>
    </lineage>
</organism>
<protein>
    <recommendedName>
        <fullName evidence="4">Fe(2+) transporter FeoB</fullName>
    </recommendedName>
    <alternativeName>
        <fullName>Ferrous iron transport protein B</fullName>
    </alternativeName>
</protein>